<proteinExistence type="inferred from homology"/>
<gene>
    <name evidence="1" type="primary">tusB</name>
    <name type="ordered locus">EcSMS35_3624</name>
</gene>
<evidence type="ECO:0000255" key="1">
    <source>
        <dbReference type="HAMAP-Rule" id="MF_01564"/>
    </source>
</evidence>
<protein>
    <recommendedName>
        <fullName evidence="1">Protein TusB</fullName>
    </recommendedName>
    <alternativeName>
        <fullName evidence="1">tRNA 2-thiouridine synthesizing protein B</fullName>
    </alternativeName>
</protein>
<comment type="function">
    <text evidence="1">Part of a sulfur-relay system required for 2-thiolation of 5-methylaminomethyl-2-thiouridine (mnm(5)s(2)U) at tRNA wobble positions.</text>
</comment>
<comment type="subunit">
    <text evidence="1">Heterohexamer, formed by a dimer of trimers. The hexameric TusBCD complex contains 2 copies each of TusB, TusC and TusD. The TusBCD complex interacts with TusE.</text>
</comment>
<comment type="subcellular location">
    <subcellularLocation>
        <location evidence="1">Cytoplasm</location>
    </subcellularLocation>
</comment>
<comment type="similarity">
    <text evidence="1">Belongs to the DsrH/TusB family.</text>
</comment>
<name>TUSB_ECOSM</name>
<accession>B1LHE3</accession>
<organism>
    <name type="scientific">Escherichia coli (strain SMS-3-5 / SECEC)</name>
    <dbReference type="NCBI Taxonomy" id="439855"/>
    <lineage>
        <taxon>Bacteria</taxon>
        <taxon>Pseudomonadati</taxon>
        <taxon>Pseudomonadota</taxon>
        <taxon>Gammaproteobacteria</taxon>
        <taxon>Enterobacterales</taxon>
        <taxon>Enterobacteriaceae</taxon>
        <taxon>Escherichia</taxon>
    </lineage>
</organism>
<dbReference type="EMBL" id="CP000970">
    <property type="protein sequence ID" value="ACB18604.1"/>
    <property type="molecule type" value="Genomic_DNA"/>
</dbReference>
<dbReference type="RefSeq" id="WP_000903385.1">
    <property type="nucleotide sequence ID" value="NC_010498.1"/>
</dbReference>
<dbReference type="SMR" id="B1LHE3"/>
<dbReference type="KEGG" id="ecm:EcSMS35_3624"/>
<dbReference type="HOGENOM" id="CLU_166087_2_1_6"/>
<dbReference type="Proteomes" id="UP000007011">
    <property type="component" value="Chromosome"/>
</dbReference>
<dbReference type="GO" id="GO:1990228">
    <property type="term" value="C:sulfurtransferase complex"/>
    <property type="evidence" value="ECO:0007669"/>
    <property type="project" value="TreeGrafter"/>
</dbReference>
<dbReference type="GO" id="GO:0002143">
    <property type="term" value="P:tRNA wobble position uridine thiolation"/>
    <property type="evidence" value="ECO:0007669"/>
    <property type="project" value="InterPro"/>
</dbReference>
<dbReference type="FunFam" id="3.40.1260.10:FF:000002">
    <property type="entry name" value="Sulfurtransferase TusB"/>
    <property type="match status" value="1"/>
</dbReference>
<dbReference type="Gene3D" id="3.40.1260.10">
    <property type="entry name" value="DsrEFH-like"/>
    <property type="match status" value="1"/>
</dbReference>
<dbReference type="HAMAP" id="MF_01564">
    <property type="entry name" value="Thiourid_synth_B"/>
    <property type="match status" value="1"/>
</dbReference>
<dbReference type="InterPro" id="IPR027396">
    <property type="entry name" value="DsrEFH-like"/>
</dbReference>
<dbReference type="InterPro" id="IPR023526">
    <property type="entry name" value="Sulphur_relay_TusB"/>
</dbReference>
<dbReference type="InterPro" id="IPR007215">
    <property type="entry name" value="Sulphur_relay_TusB/DsrH"/>
</dbReference>
<dbReference type="NCBIfam" id="NF010035">
    <property type="entry name" value="PRK13510.1"/>
    <property type="match status" value="1"/>
</dbReference>
<dbReference type="NCBIfam" id="TIGR03011">
    <property type="entry name" value="sulf_tusB_dsrH"/>
    <property type="match status" value="1"/>
</dbReference>
<dbReference type="PANTHER" id="PTHR37526">
    <property type="entry name" value="PROTEIN TUSB"/>
    <property type="match status" value="1"/>
</dbReference>
<dbReference type="PANTHER" id="PTHR37526:SF1">
    <property type="entry name" value="PROTEIN TUSB"/>
    <property type="match status" value="1"/>
</dbReference>
<dbReference type="Pfam" id="PF04077">
    <property type="entry name" value="DsrH"/>
    <property type="match status" value="1"/>
</dbReference>
<dbReference type="SUPFAM" id="SSF75169">
    <property type="entry name" value="DsrEFH-like"/>
    <property type="match status" value="1"/>
</dbReference>
<reference key="1">
    <citation type="journal article" date="2008" name="J. Bacteriol.">
        <title>Insights into the environmental resistance gene pool from the genome sequence of the multidrug-resistant environmental isolate Escherichia coli SMS-3-5.</title>
        <authorList>
            <person name="Fricke W.F."/>
            <person name="Wright M.S."/>
            <person name="Lindell A.H."/>
            <person name="Harkins D.M."/>
            <person name="Baker-Austin C."/>
            <person name="Ravel J."/>
            <person name="Stepanauskas R."/>
        </authorList>
    </citation>
    <scope>NUCLEOTIDE SEQUENCE [LARGE SCALE GENOMIC DNA]</scope>
    <source>
        <strain>SMS-3-5 / SECEC</strain>
    </source>
</reference>
<sequence length="95" mass="10653">MLHTLHRSPWLTDFAALLRLLSEGDELLLLQDGVTAGVDGNCYLESLRNAPIKVYALNEDLIARGLTGRISNDIIPIDYTDFVRLTVKHSSQMAW</sequence>
<feature type="chain" id="PRO_1000147182" description="Protein TusB">
    <location>
        <begin position="1"/>
        <end position="95"/>
    </location>
</feature>
<keyword id="KW-0963">Cytoplasm</keyword>
<keyword id="KW-0819">tRNA processing</keyword>